<evidence type="ECO:0000255" key="1">
    <source>
        <dbReference type="HAMAP-Rule" id="MF_01445"/>
    </source>
</evidence>
<sequence length="356" mass="38936">MRKVLAIETSCDETSVSIVSNIGDNFKIHSNIIASQIEDHAKWGGVVPELAARKHLELLPFVLEKALAESEIKIEEIDYIASTVAPGLAGCLRVGSITARSLCMLHSKPFLGIHHLEGHLSSILFSENYPKKSFLTLLVSGGHTELIKVDDRRRMQRLGKSFDDAAGEAFDKVGRLLGLSYPGGPAIEKIAKNGDPMKFNLPKCKISDKKGGFLKYDFSFSGLKTAVLRLVERINLDGKDVPIPDIAASFERVVAEVLVERTIKCAKDHRLENVVLVGGVAANNTLRKMMINEASKKSIKVHLAPLNLCTDNAAMIGAAALFRIKFKDHLSSLKLGVAGRLSIEQANTLYEENPPF</sequence>
<protein>
    <recommendedName>
        <fullName evidence="1">tRNA N6-adenosine threonylcarbamoyltransferase</fullName>
        <ecNumber evidence="1">2.3.1.234</ecNumber>
    </recommendedName>
    <alternativeName>
        <fullName evidence="1">N6-L-threonylcarbamoyladenine synthase</fullName>
        <shortName evidence="1">t(6)A synthase</shortName>
    </alternativeName>
    <alternativeName>
        <fullName evidence="1">t(6)A37 threonylcarbamoyladenosine biosynthesis protein TsaD</fullName>
    </alternativeName>
    <alternativeName>
        <fullName evidence="1">tRNA threonylcarbamoyladenosine biosynthesis protein TsaD</fullName>
    </alternativeName>
</protein>
<keyword id="KW-0012">Acyltransferase</keyword>
<keyword id="KW-0963">Cytoplasm</keyword>
<keyword id="KW-0408">Iron</keyword>
<keyword id="KW-0479">Metal-binding</keyword>
<keyword id="KW-0808">Transferase</keyword>
<keyword id="KW-0819">tRNA processing</keyword>
<organism>
    <name type="scientific">Prochlorococcus marinus (strain MIT 9215)</name>
    <dbReference type="NCBI Taxonomy" id="93060"/>
    <lineage>
        <taxon>Bacteria</taxon>
        <taxon>Bacillati</taxon>
        <taxon>Cyanobacteriota</taxon>
        <taxon>Cyanophyceae</taxon>
        <taxon>Synechococcales</taxon>
        <taxon>Prochlorococcaceae</taxon>
        <taxon>Prochlorococcus</taxon>
    </lineage>
</organism>
<feature type="chain" id="PRO_1000068573" description="tRNA N6-adenosine threonylcarbamoyltransferase">
    <location>
        <begin position="1"/>
        <end position="356"/>
    </location>
</feature>
<feature type="binding site" evidence="1">
    <location>
        <position position="115"/>
    </location>
    <ligand>
        <name>Fe cation</name>
        <dbReference type="ChEBI" id="CHEBI:24875"/>
    </ligand>
</feature>
<feature type="binding site" evidence="1">
    <location>
        <position position="119"/>
    </location>
    <ligand>
        <name>Fe cation</name>
        <dbReference type="ChEBI" id="CHEBI:24875"/>
    </ligand>
</feature>
<feature type="binding site" evidence="1">
    <location>
        <begin position="138"/>
        <end position="142"/>
    </location>
    <ligand>
        <name>substrate</name>
    </ligand>
</feature>
<feature type="binding site" evidence="1">
    <location>
        <position position="171"/>
    </location>
    <ligand>
        <name>substrate</name>
    </ligand>
</feature>
<feature type="binding site" evidence="1">
    <location>
        <position position="184"/>
    </location>
    <ligand>
        <name>substrate</name>
    </ligand>
</feature>
<feature type="binding site" evidence="1">
    <location>
        <position position="283"/>
    </location>
    <ligand>
        <name>substrate</name>
    </ligand>
</feature>
<feature type="binding site" evidence="1">
    <location>
        <position position="311"/>
    </location>
    <ligand>
        <name>Fe cation</name>
        <dbReference type="ChEBI" id="CHEBI:24875"/>
    </ligand>
</feature>
<accession>A8G3I5</accession>
<reference key="1">
    <citation type="journal article" date="2007" name="PLoS Genet.">
        <title>Patterns and implications of gene gain and loss in the evolution of Prochlorococcus.</title>
        <authorList>
            <person name="Kettler G.C."/>
            <person name="Martiny A.C."/>
            <person name="Huang K."/>
            <person name="Zucker J."/>
            <person name="Coleman M.L."/>
            <person name="Rodrigue S."/>
            <person name="Chen F."/>
            <person name="Lapidus A."/>
            <person name="Ferriera S."/>
            <person name="Johnson J."/>
            <person name="Steglich C."/>
            <person name="Church G.M."/>
            <person name="Richardson P."/>
            <person name="Chisholm S.W."/>
        </authorList>
    </citation>
    <scope>NUCLEOTIDE SEQUENCE [LARGE SCALE GENOMIC DNA]</scope>
    <source>
        <strain>MIT 9215</strain>
    </source>
</reference>
<name>TSAD_PROM2</name>
<proteinExistence type="inferred from homology"/>
<dbReference type="EC" id="2.3.1.234" evidence="1"/>
<dbReference type="EMBL" id="CP000825">
    <property type="protein sequence ID" value="ABV50166.1"/>
    <property type="molecule type" value="Genomic_DNA"/>
</dbReference>
<dbReference type="RefSeq" id="WP_012007295.1">
    <property type="nucleotide sequence ID" value="NC_009840.1"/>
</dbReference>
<dbReference type="SMR" id="A8G3I5"/>
<dbReference type="STRING" id="93060.P9215_05501"/>
<dbReference type="KEGG" id="pmh:P9215_05501"/>
<dbReference type="eggNOG" id="COG0533">
    <property type="taxonomic scope" value="Bacteria"/>
</dbReference>
<dbReference type="HOGENOM" id="CLU_023208_0_2_3"/>
<dbReference type="OrthoDB" id="9806197at2"/>
<dbReference type="Proteomes" id="UP000002014">
    <property type="component" value="Chromosome"/>
</dbReference>
<dbReference type="GO" id="GO:0005737">
    <property type="term" value="C:cytoplasm"/>
    <property type="evidence" value="ECO:0007669"/>
    <property type="project" value="UniProtKB-SubCell"/>
</dbReference>
<dbReference type="GO" id="GO:0005506">
    <property type="term" value="F:iron ion binding"/>
    <property type="evidence" value="ECO:0007669"/>
    <property type="project" value="UniProtKB-UniRule"/>
</dbReference>
<dbReference type="GO" id="GO:0061711">
    <property type="term" value="F:N(6)-L-threonylcarbamoyladenine synthase activity"/>
    <property type="evidence" value="ECO:0007669"/>
    <property type="project" value="UniProtKB-EC"/>
</dbReference>
<dbReference type="GO" id="GO:0002949">
    <property type="term" value="P:tRNA threonylcarbamoyladenosine modification"/>
    <property type="evidence" value="ECO:0007669"/>
    <property type="project" value="UniProtKB-UniRule"/>
</dbReference>
<dbReference type="CDD" id="cd24133">
    <property type="entry name" value="ASKHA_NBD_TsaD_bac"/>
    <property type="match status" value="1"/>
</dbReference>
<dbReference type="FunFam" id="3.30.420.40:FF:000012">
    <property type="entry name" value="tRNA N6-adenosine threonylcarbamoyltransferase"/>
    <property type="match status" value="1"/>
</dbReference>
<dbReference type="FunFam" id="3.30.420.40:FF:000040">
    <property type="entry name" value="tRNA N6-adenosine threonylcarbamoyltransferase"/>
    <property type="match status" value="1"/>
</dbReference>
<dbReference type="Gene3D" id="3.30.420.40">
    <property type="match status" value="2"/>
</dbReference>
<dbReference type="HAMAP" id="MF_01445">
    <property type="entry name" value="TsaD"/>
    <property type="match status" value="1"/>
</dbReference>
<dbReference type="InterPro" id="IPR043129">
    <property type="entry name" value="ATPase_NBD"/>
</dbReference>
<dbReference type="InterPro" id="IPR000905">
    <property type="entry name" value="Gcp-like_dom"/>
</dbReference>
<dbReference type="InterPro" id="IPR017861">
    <property type="entry name" value="KAE1/TsaD"/>
</dbReference>
<dbReference type="InterPro" id="IPR022450">
    <property type="entry name" value="TsaD"/>
</dbReference>
<dbReference type="NCBIfam" id="TIGR00329">
    <property type="entry name" value="gcp_kae1"/>
    <property type="match status" value="1"/>
</dbReference>
<dbReference type="NCBIfam" id="TIGR03723">
    <property type="entry name" value="T6A_TsaD_YgjD"/>
    <property type="match status" value="1"/>
</dbReference>
<dbReference type="PANTHER" id="PTHR11735">
    <property type="entry name" value="TRNA N6-ADENOSINE THREONYLCARBAMOYLTRANSFERASE"/>
    <property type="match status" value="1"/>
</dbReference>
<dbReference type="PANTHER" id="PTHR11735:SF6">
    <property type="entry name" value="TRNA N6-ADENOSINE THREONYLCARBAMOYLTRANSFERASE, MITOCHONDRIAL"/>
    <property type="match status" value="1"/>
</dbReference>
<dbReference type="Pfam" id="PF00814">
    <property type="entry name" value="TsaD"/>
    <property type="match status" value="1"/>
</dbReference>
<dbReference type="PRINTS" id="PR00789">
    <property type="entry name" value="OSIALOPTASE"/>
</dbReference>
<dbReference type="SUPFAM" id="SSF53067">
    <property type="entry name" value="Actin-like ATPase domain"/>
    <property type="match status" value="2"/>
</dbReference>
<comment type="function">
    <text evidence="1">Required for the formation of a threonylcarbamoyl group on adenosine at position 37 (t(6)A37) in tRNAs that read codons beginning with adenine. Is involved in the transfer of the threonylcarbamoyl moiety of threonylcarbamoyl-AMP (TC-AMP) to the N6 group of A37, together with TsaE and TsaB. TsaD likely plays a direct catalytic role in this reaction.</text>
</comment>
<comment type="catalytic activity">
    <reaction evidence="1">
        <text>L-threonylcarbamoyladenylate + adenosine(37) in tRNA = N(6)-L-threonylcarbamoyladenosine(37) in tRNA + AMP + H(+)</text>
        <dbReference type="Rhea" id="RHEA:37059"/>
        <dbReference type="Rhea" id="RHEA-COMP:10162"/>
        <dbReference type="Rhea" id="RHEA-COMP:10163"/>
        <dbReference type="ChEBI" id="CHEBI:15378"/>
        <dbReference type="ChEBI" id="CHEBI:73682"/>
        <dbReference type="ChEBI" id="CHEBI:74411"/>
        <dbReference type="ChEBI" id="CHEBI:74418"/>
        <dbReference type="ChEBI" id="CHEBI:456215"/>
        <dbReference type="EC" id="2.3.1.234"/>
    </reaction>
</comment>
<comment type="cofactor">
    <cofactor evidence="1">
        <name>Fe(2+)</name>
        <dbReference type="ChEBI" id="CHEBI:29033"/>
    </cofactor>
    <text evidence="1">Binds 1 Fe(2+) ion per subunit.</text>
</comment>
<comment type="subcellular location">
    <subcellularLocation>
        <location evidence="1">Cytoplasm</location>
    </subcellularLocation>
</comment>
<comment type="similarity">
    <text evidence="1">Belongs to the KAE1 / TsaD family.</text>
</comment>
<gene>
    <name evidence="1" type="primary">tsaD</name>
    <name type="synonym">gcp</name>
    <name type="ordered locus">P9215_05501</name>
</gene>